<accession>Q9ZCH6</accession>
<name>Y766_RICPR</name>
<keyword id="KW-0238">DNA-binding</keyword>
<keyword id="KW-1185">Reference proteome</keyword>
<keyword id="KW-0804">Transcription</keyword>
<keyword id="KW-0805">Transcription regulation</keyword>
<gene>
    <name type="ordered locus">RP766</name>
</gene>
<dbReference type="EMBL" id="AJ235273">
    <property type="protein sequence ID" value="CAA15194.1"/>
    <property type="molecule type" value="Genomic_DNA"/>
</dbReference>
<dbReference type="PIR" id="B71637">
    <property type="entry name" value="B71637"/>
</dbReference>
<dbReference type="RefSeq" id="NP_221118.1">
    <property type="nucleotide sequence ID" value="NC_000963.1"/>
</dbReference>
<dbReference type="SMR" id="Q9ZCH6"/>
<dbReference type="STRING" id="272947.gene:17555836"/>
<dbReference type="EnsemblBacteria" id="CAA15194">
    <property type="protein sequence ID" value="CAA15194"/>
    <property type="gene ID" value="CAA15194"/>
</dbReference>
<dbReference type="KEGG" id="rpr:RP766"/>
<dbReference type="PATRIC" id="fig|272947.5.peg.802"/>
<dbReference type="HOGENOM" id="CLU_2411305_0_0_5"/>
<dbReference type="OrthoDB" id="7161084at2"/>
<dbReference type="Proteomes" id="UP000002480">
    <property type="component" value="Chromosome"/>
</dbReference>
<dbReference type="GO" id="GO:0003677">
    <property type="term" value="F:DNA binding"/>
    <property type="evidence" value="ECO:0007669"/>
    <property type="project" value="UniProtKB-KW"/>
</dbReference>
<dbReference type="CDD" id="cd00093">
    <property type="entry name" value="HTH_XRE"/>
    <property type="match status" value="1"/>
</dbReference>
<dbReference type="Gene3D" id="1.10.260.40">
    <property type="entry name" value="lambda repressor-like DNA-binding domains"/>
    <property type="match status" value="1"/>
</dbReference>
<dbReference type="InterPro" id="IPR001387">
    <property type="entry name" value="Cro/C1-type_HTH"/>
</dbReference>
<dbReference type="InterPro" id="IPR010982">
    <property type="entry name" value="Lambda_DNA-bd_dom_sf"/>
</dbReference>
<dbReference type="Pfam" id="PF13443">
    <property type="entry name" value="HTH_26"/>
    <property type="match status" value="1"/>
</dbReference>
<dbReference type="SMART" id="SM00530">
    <property type="entry name" value="HTH_XRE"/>
    <property type="match status" value="1"/>
</dbReference>
<dbReference type="SUPFAM" id="SSF47413">
    <property type="entry name" value="lambda repressor-like DNA-binding domains"/>
    <property type="match status" value="1"/>
</dbReference>
<dbReference type="PROSITE" id="PS50943">
    <property type="entry name" value="HTH_CROC1"/>
    <property type="match status" value="1"/>
</dbReference>
<proteinExistence type="predicted"/>
<sequence>MYIYKSFIYSEVINMALATKVKEFLEEKLKQEKIDRKYLAQVTNIPYTTVSRIMRAEANREFNPEIDTILKIAKYFNCTMDEVIKRKVHNNS</sequence>
<reference key="1">
    <citation type="journal article" date="1998" name="Nature">
        <title>The genome sequence of Rickettsia prowazekii and the origin of mitochondria.</title>
        <authorList>
            <person name="Andersson S.G.E."/>
            <person name="Zomorodipour A."/>
            <person name="Andersson J.O."/>
            <person name="Sicheritz-Ponten T."/>
            <person name="Alsmark U.C.M."/>
            <person name="Podowski R.M."/>
            <person name="Naeslund A.K."/>
            <person name="Eriksson A.-S."/>
            <person name="Winkler H.H."/>
            <person name="Kurland C.G."/>
        </authorList>
    </citation>
    <scope>NUCLEOTIDE SEQUENCE [LARGE SCALE GENOMIC DNA]</scope>
    <source>
        <strain>Madrid E</strain>
    </source>
</reference>
<protein>
    <recommendedName>
        <fullName>Uncharacterized HTH-type transcriptional regulator RP766</fullName>
    </recommendedName>
</protein>
<organism>
    <name type="scientific">Rickettsia prowazekii (strain Madrid E)</name>
    <dbReference type="NCBI Taxonomy" id="272947"/>
    <lineage>
        <taxon>Bacteria</taxon>
        <taxon>Pseudomonadati</taxon>
        <taxon>Pseudomonadota</taxon>
        <taxon>Alphaproteobacteria</taxon>
        <taxon>Rickettsiales</taxon>
        <taxon>Rickettsiaceae</taxon>
        <taxon>Rickettsieae</taxon>
        <taxon>Rickettsia</taxon>
        <taxon>typhus group</taxon>
    </lineage>
</organism>
<feature type="chain" id="PRO_0000149783" description="Uncharacterized HTH-type transcriptional regulator RP766">
    <location>
        <begin position="1"/>
        <end position="92"/>
    </location>
</feature>
<feature type="domain" description="HTH cro/C1-type" evidence="1">
    <location>
        <begin position="25"/>
        <end position="83"/>
    </location>
</feature>
<feature type="DNA-binding region" description="H-T-H motif" evidence="1">
    <location>
        <begin position="36"/>
        <end position="55"/>
    </location>
</feature>
<evidence type="ECO:0000255" key="1">
    <source>
        <dbReference type="PROSITE-ProRule" id="PRU00257"/>
    </source>
</evidence>